<reference key="1">
    <citation type="journal article" date="1997" name="Blood Cells Mol. Dis.">
        <title>Cloning of the murine platelet glycoprotein Ib(alpha) gene highlighting species-specific platelet adhesion.</title>
        <authorList>
            <person name="Ware J."/>
            <person name="Russell S."/>
            <person name="Ruggeri Z."/>
        </authorList>
    </citation>
    <scope>NUCLEOTIDE SEQUENCE [GENOMIC DNA]</scope>
    <source>
        <strain>129/SvJ</strain>
    </source>
</reference>
<reference key="2">
    <citation type="journal article" date="2009" name="PLoS Biol.">
        <title>Lineage-specific biology revealed by a finished genome assembly of the mouse.</title>
        <authorList>
            <person name="Church D.M."/>
            <person name="Goodstadt L."/>
            <person name="Hillier L.W."/>
            <person name="Zody M.C."/>
            <person name="Goldstein S."/>
            <person name="She X."/>
            <person name="Bult C.J."/>
            <person name="Agarwala R."/>
            <person name="Cherry J.L."/>
            <person name="DiCuccio M."/>
            <person name="Hlavina W."/>
            <person name="Kapustin Y."/>
            <person name="Meric P."/>
            <person name="Maglott D."/>
            <person name="Birtle Z."/>
            <person name="Marques A.C."/>
            <person name="Graves T."/>
            <person name="Zhou S."/>
            <person name="Teague B."/>
            <person name="Potamousis K."/>
            <person name="Churas C."/>
            <person name="Place M."/>
            <person name="Herschleb J."/>
            <person name="Runnheim R."/>
            <person name="Forrest D."/>
            <person name="Amos-Landgraf J."/>
            <person name="Schwartz D.C."/>
            <person name="Cheng Z."/>
            <person name="Lindblad-Toh K."/>
            <person name="Eichler E.E."/>
            <person name="Ponting C.P."/>
        </authorList>
    </citation>
    <scope>NUCLEOTIDE SEQUENCE [LARGE SCALE GENOMIC DNA]</scope>
    <source>
        <strain>C57BL/6J</strain>
    </source>
</reference>
<reference key="3">
    <citation type="journal article" date="2003" name="Blood">
        <title>Metalloproteinase inhibitors improve the recovery and hemostatic function of in vitro-aged or -injured mouse platelets.</title>
        <authorList>
            <person name="Bergmeier W."/>
            <person name="Burger P.C."/>
            <person name="Piffath C.L."/>
            <person name="Hoffmeister K.M."/>
            <person name="Hartwig J.H."/>
            <person name="Nieswandt B."/>
            <person name="Wagner D.D."/>
        </authorList>
    </citation>
    <scope>PROTEOLYTIC CLEAVAGE BY ADAM17</scope>
</reference>
<reference key="4">
    <citation type="journal article" date="2010" name="Cell">
        <title>A tissue-specific atlas of mouse protein phosphorylation and expression.</title>
        <authorList>
            <person name="Huttlin E.L."/>
            <person name="Jedrychowski M.P."/>
            <person name="Elias J.E."/>
            <person name="Goswami T."/>
            <person name="Rad R."/>
            <person name="Beausoleil S.A."/>
            <person name="Villen J."/>
            <person name="Haas W."/>
            <person name="Sowa M.E."/>
            <person name="Gygi S.P."/>
        </authorList>
    </citation>
    <scope>IDENTIFICATION BY MASS SPECTROMETRY [LARGE SCALE ANALYSIS]</scope>
    <source>
        <tissue>Heart</tissue>
        <tissue>Liver</tissue>
        <tissue>Lung</tissue>
        <tissue>Spleen</tissue>
    </source>
</reference>
<reference key="5">
    <citation type="journal article" date="2002" name="Thromb. Haemost.">
        <title>Molecular modeling of the seven tandem leucine-rich repeats within the ligand-binding region of platelet glycoprotein Ib alpha.</title>
        <authorList>
            <person name="Whisstock J.C."/>
            <person name="Shen Y."/>
            <person name="Lopez J.A."/>
            <person name="Andrews R.K."/>
            <person name="Berndt M.C."/>
        </authorList>
    </citation>
    <scope>3D-STRUCTURE MODELING OF 52-216</scope>
</reference>
<organism>
    <name type="scientific">Mus musculus</name>
    <name type="common">Mouse</name>
    <dbReference type="NCBI Taxonomy" id="10090"/>
    <lineage>
        <taxon>Eukaryota</taxon>
        <taxon>Metazoa</taxon>
        <taxon>Chordata</taxon>
        <taxon>Craniata</taxon>
        <taxon>Vertebrata</taxon>
        <taxon>Euteleostomi</taxon>
        <taxon>Mammalia</taxon>
        <taxon>Eutheria</taxon>
        <taxon>Euarchontoglires</taxon>
        <taxon>Glires</taxon>
        <taxon>Rodentia</taxon>
        <taxon>Myomorpha</taxon>
        <taxon>Muroidea</taxon>
        <taxon>Muridae</taxon>
        <taxon>Murinae</taxon>
        <taxon>Mus</taxon>
        <taxon>Mus</taxon>
    </lineage>
</organism>
<proteinExistence type="evidence at protein level"/>
<sequence>MALLILLFLLPSPLHSQHTCSISKVTSLLEVNCENKKLTALPADLPADTGILHLGENQLGTFSTASLVHFTHLTYLYLDRCELTSLQTNGKLIKLENLDLSHNNLKSLPSLGWALPALTTLDVSFNKLGSLSPGVLDGLSQLQELYLQNNDLKSLPPGLLLPTTKLKKLNLANNKLRELPSGLLDGLEDLDTLYLQRNWLRTIPKGFFGTLLLPFVFLHANSWYCDCEILYFRHWLQENANNVYLWKQGVDVKDTTPNVASVRCANLDNAPVYSYPGKGCPTSSGDTDYDDYDDIPDVPATRTEVKFSTNTKVHTTHWSLLAAAPSTSQDSQMISLPPTHKPTKKQSTFIHTQSPGFTTLPETMESNPTFYSLKLNTVLIPSPTTLEPTSTQATPEPNIQPMLTTSTLTTPEHSTTPVPTTTILTTPEHSTIPVPTTAILTTPKPSTIPVPTTATLTTLEPSTTPVPTTATLTTPEPSTTLVPTTATLTTPEHSTTPVPTTATLTTPEHSTTPVPTTATLTTPEPSTTLTNLVSTISPVLTTTLTTPESTPIETILEQFFTTELTLLPTLESTTTIIPEQNSFLNLPEVALVSSDTSESSPFLNSDFCCFLPLGFYVLGLLWLLFASVVLILLLTWTWHVTPHSLDMEQSAALATSTHTTSLEVQRARQVTMPRAWLLFLQGSLPTFRSSLFLWVRPNGRVGPLVAGRRPSALSQGRGQDLLGTVGIRYSGHSL</sequence>
<accession>O35930</accession>
<accession>Q5SX47</accession>
<dbReference type="EMBL" id="U91967">
    <property type="protein sequence ID" value="AAC53320.1"/>
    <property type="molecule type" value="Genomic_DNA"/>
</dbReference>
<dbReference type="EMBL" id="AL596117">
    <property type="status" value="NOT_ANNOTATED_CDS"/>
    <property type="molecule type" value="Genomic_DNA"/>
</dbReference>
<dbReference type="CCDS" id="CCDS24957.1"/>
<dbReference type="RefSeq" id="NP_001418327.1">
    <property type="nucleotide sequence ID" value="NM_001431398.1"/>
</dbReference>
<dbReference type="RefSeq" id="NP_034456.2">
    <property type="nucleotide sequence ID" value="NM_010326.2"/>
</dbReference>
<dbReference type="RefSeq" id="XP_006532295.1">
    <property type="nucleotide sequence ID" value="XM_006532232.3"/>
</dbReference>
<dbReference type="PDB" id="6EJX">
    <property type="method" value="X-ray"/>
    <property type="resolution" value="2.00 A"/>
    <property type="chains" value="A/D=16-282"/>
</dbReference>
<dbReference type="PDBsum" id="6EJX"/>
<dbReference type="SMR" id="O35930"/>
<dbReference type="BioGRID" id="200003">
    <property type="interactions" value="1"/>
</dbReference>
<dbReference type="ComplexPortal" id="CPX-115">
    <property type="entry name" value="Glycoprotein Ib-IX-V complex"/>
</dbReference>
<dbReference type="ComplexPortal" id="CPX-118">
    <property type="entry name" value="Glycoprotein Ib-IX-V-Filamin-A complex"/>
</dbReference>
<dbReference type="FunCoup" id="O35930">
    <property type="interactions" value="183"/>
</dbReference>
<dbReference type="STRING" id="10090.ENSMUSP00000057563"/>
<dbReference type="GlyGen" id="O35930">
    <property type="glycosylation" value="23 sites"/>
</dbReference>
<dbReference type="iPTMnet" id="O35930"/>
<dbReference type="PhosphoSitePlus" id="O35930"/>
<dbReference type="CPTAC" id="non-CPTAC-5607"/>
<dbReference type="PaxDb" id="10090-ENSMUSP00000057563"/>
<dbReference type="ProteomicsDB" id="267753"/>
<dbReference type="Antibodypedia" id="2697">
    <property type="antibodies" value="938 antibodies from 40 providers"/>
</dbReference>
<dbReference type="DNASU" id="14723"/>
<dbReference type="Ensembl" id="ENSMUST00000055184.7">
    <property type="protein sequence ID" value="ENSMUSP00000057563.7"/>
    <property type="gene ID" value="ENSMUSG00000050675.8"/>
</dbReference>
<dbReference type="Ensembl" id="ENSMUST00000108551.3">
    <property type="protein sequence ID" value="ENSMUSP00000104191.3"/>
    <property type="gene ID" value="ENSMUSG00000050675.8"/>
</dbReference>
<dbReference type="GeneID" id="14723"/>
<dbReference type="UCSC" id="uc007jvq.1">
    <property type="organism name" value="mouse"/>
</dbReference>
<dbReference type="AGR" id="MGI:1333744"/>
<dbReference type="CTD" id="2811"/>
<dbReference type="MGI" id="MGI:1333744">
    <property type="gene designation" value="Gp1ba"/>
</dbReference>
<dbReference type="VEuPathDB" id="HostDB:ENSMUSG00000050675"/>
<dbReference type="eggNOG" id="KOG0619">
    <property type="taxonomic scope" value="Eukaryota"/>
</dbReference>
<dbReference type="GeneTree" id="ENSGT00940000163073"/>
<dbReference type="HOGENOM" id="CLU_027577_0_0_1"/>
<dbReference type="InParanoid" id="O35930"/>
<dbReference type="OMA" id="NPDFCCL"/>
<dbReference type="OrthoDB" id="676979at2759"/>
<dbReference type="PhylomeDB" id="O35930"/>
<dbReference type="TreeFam" id="TF351114"/>
<dbReference type="Reactome" id="R-MMU-140837">
    <property type="pathway name" value="Intrinsic Pathway of Fibrin Clot Formation"/>
</dbReference>
<dbReference type="Reactome" id="R-MMU-430116">
    <property type="pathway name" value="GP1b-IX-V activation signalling"/>
</dbReference>
<dbReference type="Reactome" id="R-MMU-75892">
    <property type="pathway name" value="Platelet Adhesion to exposed collagen"/>
</dbReference>
<dbReference type="Reactome" id="R-MMU-76009">
    <property type="pathway name" value="Platelet Aggregation (Plug Formation)"/>
</dbReference>
<dbReference type="BioGRID-ORCS" id="14723">
    <property type="hits" value="4 hits in 78 CRISPR screens"/>
</dbReference>
<dbReference type="PRO" id="PR:O35930"/>
<dbReference type="Proteomes" id="UP000000589">
    <property type="component" value="Chromosome 11"/>
</dbReference>
<dbReference type="RNAct" id="O35930">
    <property type="molecule type" value="protein"/>
</dbReference>
<dbReference type="Bgee" id="ENSMUSG00000050675">
    <property type="expression patterns" value="Expressed in blood and 60 other cell types or tissues"/>
</dbReference>
<dbReference type="ExpressionAtlas" id="O35930">
    <property type="expression patterns" value="baseline and differential"/>
</dbReference>
<dbReference type="GO" id="GO:0009986">
    <property type="term" value="C:cell surface"/>
    <property type="evidence" value="ECO:0000314"/>
    <property type="project" value="MGI"/>
</dbReference>
<dbReference type="GO" id="GO:0009897">
    <property type="term" value="C:external side of plasma membrane"/>
    <property type="evidence" value="ECO:0007669"/>
    <property type="project" value="Ensembl"/>
</dbReference>
<dbReference type="GO" id="GO:1990779">
    <property type="term" value="C:glycoprotein Ib-IX-V complex"/>
    <property type="evidence" value="ECO:0000266"/>
    <property type="project" value="ComplexPortal"/>
</dbReference>
<dbReference type="GO" id="GO:0016020">
    <property type="term" value="C:membrane"/>
    <property type="evidence" value="ECO:0000266"/>
    <property type="project" value="MGI"/>
</dbReference>
<dbReference type="GO" id="GO:0005886">
    <property type="term" value="C:plasma membrane"/>
    <property type="evidence" value="ECO:0000250"/>
    <property type="project" value="MGI"/>
</dbReference>
<dbReference type="GO" id="GO:0007596">
    <property type="term" value="P:blood coagulation"/>
    <property type="evidence" value="ECO:0000314"/>
    <property type="project" value="ComplexPortal"/>
</dbReference>
<dbReference type="GO" id="GO:0007597">
    <property type="term" value="P:blood coagulation, intrinsic pathway"/>
    <property type="evidence" value="ECO:0000266"/>
    <property type="project" value="ComplexPortal"/>
</dbReference>
<dbReference type="GO" id="GO:0007155">
    <property type="term" value="P:cell adhesion"/>
    <property type="evidence" value="ECO:0000266"/>
    <property type="project" value="MGI"/>
</dbReference>
<dbReference type="GO" id="GO:0000902">
    <property type="term" value="P:cell morphogenesis"/>
    <property type="evidence" value="ECO:0000315"/>
    <property type="project" value="MGI"/>
</dbReference>
<dbReference type="GO" id="GO:0042730">
    <property type="term" value="P:fibrinolysis"/>
    <property type="evidence" value="ECO:0007669"/>
    <property type="project" value="Ensembl"/>
</dbReference>
<dbReference type="GO" id="GO:0007599">
    <property type="term" value="P:hemostasis"/>
    <property type="evidence" value="ECO:0000315"/>
    <property type="project" value="MGI"/>
</dbReference>
<dbReference type="GO" id="GO:0035855">
    <property type="term" value="P:megakaryocyte development"/>
    <property type="evidence" value="ECO:0000315"/>
    <property type="project" value="ComplexPortal"/>
</dbReference>
<dbReference type="GO" id="GO:0010572">
    <property type="term" value="P:positive regulation of platelet activation"/>
    <property type="evidence" value="ECO:0000266"/>
    <property type="project" value="ComplexPortal"/>
</dbReference>
<dbReference type="GO" id="GO:0051209">
    <property type="term" value="P:release of sequestered calcium ion into cytosol"/>
    <property type="evidence" value="ECO:0000266"/>
    <property type="project" value="ComplexPortal"/>
</dbReference>
<dbReference type="FunFam" id="3.80.10.10:FF:000347">
    <property type="entry name" value="Platelet glycoprotein Ib alpha chain"/>
    <property type="match status" value="1"/>
</dbReference>
<dbReference type="Gene3D" id="3.80.10.10">
    <property type="entry name" value="Ribonuclease Inhibitor"/>
    <property type="match status" value="1"/>
</dbReference>
<dbReference type="InterPro" id="IPR000483">
    <property type="entry name" value="Cys-rich_flank_reg_C"/>
</dbReference>
<dbReference type="InterPro" id="IPR001611">
    <property type="entry name" value="Leu-rich_rpt"/>
</dbReference>
<dbReference type="InterPro" id="IPR003591">
    <property type="entry name" value="Leu-rich_rpt_typical-subtyp"/>
</dbReference>
<dbReference type="InterPro" id="IPR032675">
    <property type="entry name" value="LRR_dom_sf"/>
</dbReference>
<dbReference type="PANTHER" id="PTHR24366">
    <property type="entry name" value="IG(IMMUNOGLOBULIN) AND LRR(LEUCINE RICH REPEAT) DOMAINS"/>
    <property type="match status" value="1"/>
</dbReference>
<dbReference type="PANTHER" id="PTHR24366:SF158">
    <property type="entry name" value="PLATELET GLYCOPROTEIN IB ALPHA CHAIN-LIKE-RELATED"/>
    <property type="match status" value="1"/>
</dbReference>
<dbReference type="Pfam" id="PF13855">
    <property type="entry name" value="LRR_8"/>
    <property type="match status" value="2"/>
</dbReference>
<dbReference type="PRINTS" id="PR00019">
    <property type="entry name" value="LEURICHRPT"/>
</dbReference>
<dbReference type="SMART" id="SM00364">
    <property type="entry name" value="LRR_BAC"/>
    <property type="match status" value="4"/>
</dbReference>
<dbReference type="SMART" id="SM00369">
    <property type="entry name" value="LRR_TYP"/>
    <property type="match status" value="6"/>
</dbReference>
<dbReference type="SMART" id="SM00082">
    <property type="entry name" value="LRRCT"/>
    <property type="match status" value="1"/>
</dbReference>
<dbReference type="SUPFAM" id="SSF52058">
    <property type="entry name" value="L domain-like"/>
    <property type="match status" value="1"/>
</dbReference>
<dbReference type="PROSITE" id="PS51450">
    <property type="entry name" value="LRR"/>
    <property type="match status" value="6"/>
</dbReference>
<comment type="function">
    <text evidence="1">GP-Ib, a surface membrane protein of platelets, participates in the formation of platelet plugs by binding to the A1 domain of vWF, which is already bound to the subendothelium.</text>
</comment>
<comment type="subunit">
    <text evidence="2">Two GP-Ib beta are disulfide-linked to one GP-Ib alpha. GP-IX is complexed with the GP-Ib heterodimer via a non covalent linkage. Interacts with FLNB. Interacts with FLNA (via filamin repeats 4, 9, 12, 17, 19, 21, and 23).</text>
</comment>
<comment type="subcellular location">
    <subcellularLocation>
        <location>Membrane</location>
        <topology>Single-pass type I membrane protein</topology>
    </subcellularLocation>
</comment>
<comment type="PTM">
    <text evidence="1">O-glycosylated.</text>
</comment>
<comment type="PTM">
    <text evidence="5">Glycocalicin is the product of a proteolytic cleavage/shedding, catalyzed by ADAM17, which releases most of the extracellular domain. Binding sites for vWF and thrombin are in this part of the protein.</text>
</comment>
<comment type="miscellaneous">
    <text evidence="1">Platelet activation apparently involves disruption of the macromolecular complex of GP-Ib with the platelet glycoprotein IX (GP-IX) and dissociation of GP-Ib from the actin-binding protein.</text>
</comment>
<evidence type="ECO:0000250" key="1"/>
<evidence type="ECO:0000250" key="2">
    <source>
        <dbReference type="UniProtKB" id="P07359"/>
    </source>
</evidence>
<evidence type="ECO:0000255" key="3"/>
<evidence type="ECO:0000256" key="4">
    <source>
        <dbReference type="SAM" id="MobiDB-lite"/>
    </source>
</evidence>
<evidence type="ECO:0000269" key="5">
    <source>
    </source>
</evidence>
<evidence type="ECO:0000305" key="6"/>
<evidence type="ECO:0007829" key="7">
    <source>
        <dbReference type="PDB" id="6EJX"/>
    </source>
</evidence>
<protein>
    <recommendedName>
        <fullName>Platelet glycoprotein Ib alpha chain</fullName>
        <shortName>GP-Ib alpha</shortName>
        <shortName>GPIb-alpha</shortName>
        <shortName>GPIbA</shortName>
        <shortName>Glycoprotein Ibalpha</shortName>
    </recommendedName>
    <cdAntigenName>CD42b</cdAntigenName>
    <component>
        <recommendedName>
            <fullName>Glycocalicin</fullName>
        </recommendedName>
    </component>
</protein>
<feature type="signal peptide">
    <location>
        <begin position="1"/>
        <end position="16"/>
    </location>
</feature>
<feature type="chain" id="PRO_0000271749" description="Platelet glycoprotein Ib alpha chain">
    <location>
        <begin position="17"/>
        <end position="734"/>
    </location>
</feature>
<feature type="chain" id="PRO_0000446254" description="Glycocalicin" evidence="2">
    <location>
        <begin position="17"/>
        <end position="588"/>
    </location>
</feature>
<feature type="topological domain" description="Extracellular" evidence="3">
    <location>
        <begin position="17"/>
        <end position="612"/>
    </location>
</feature>
<feature type="transmembrane region" description="Helical" evidence="3">
    <location>
        <begin position="613"/>
        <end position="633"/>
    </location>
</feature>
<feature type="topological domain" description="Cytoplasmic" evidence="3">
    <location>
        <begin position="634"/>
        <end position="734"/>
    </location>
</feature>
<feature type="domain" description="LRRNT">
    <location>
        <begin position="17"/>
        <end position="47"/>
    </location>
</feature>
<feature type="repeat" description="LRR 1">
    <location>
        <begin position="48"/>
        <end position="69"/>
    </location>
</feature>
<feature type="repeat" description="LRR 2">
    <location>
        <begin position="72"/>
        <end position="93"/>
    </location>
</feature>
<feature type="repeat" description="LRR 3">
    <location>
        <begin position="94"/>
        <end position="115"/>
    </location>
</feature>
<feature type="repeat" description="LRR 4">
    <location>
        <begin position="117"/>
        <end position="140"/>
    </location>
</feature>
<feature type="repeat" description="LRR 5">
    <location>
        <begin position="141"/>
        <end position="162"/>
    </location>
</feature>
<feature type="repeat" description="LRR 6">
    <location>
        <begin position="165"/>
        <end position="188"/>
    </location>
</feature>
<feature type="repeat" description="LRR 7">
    <location>
        <begin position="189"/>
        <end position="210"/>
    </location>
</feature>
<feature type="domain" description="LRRCT">
    <location>
        <begin position="221"/>
        <end position="282"/>
    </location>
</feature>
<feature type="region of interest" description="Disordered" evidence="4">
    <location>
        <begin position="406"/>
        <end position="429"/>
    </location>
</feature>
<feature type="region of interest" description="Disordered" evidence="4">
    <location>
        <begin position="460"/>
        <end position="526"/>
    </location>
</feature>
<feature type="site" description="Cleavage; by ADAM17" evidence="2">
    <location>
        <begin position="588"/>
        <end position="589"/>
    </location>
</feature>
<feature type="modified residue" description="Sulfotyrosine" evidence="1">
    <location>
        <position position="292"/>
    </location>
</feature>
<feature type="modified residue" description="Phosphoserine" evidence="2">
    <location>
        <position position="711"/>
    </location>
</feature>
<feature type="modified residue" description="Phosphoserine" evidence="2">
    <location>
        <position position="714"/>
    </location>
</feature>
<feature type="glycosylation site" description="O-linked (GalNAc...) threonine" evidence="2">
    <location>
        <position position="301"/>
    </location>
</feature>
<feature type="glycosylation site" description="O-linked (GalNAc...) threonine" evidence="2">
    <location>
        <position position="311"/>
    </location>
</feature>
<feature type="glycosylation site" description="O-linked (GalNAc...) threonine" evidence="2">
    <location>
        <position position="315"/>
    </location>
</feature>
<feature type="glycosylation site" description="O-linked (GalNAc...) threonine" evidence="2">
    <location>
        <position position="316"/>
    </location>
</feature>
<feature type="glycosylation site" description="O-linked (GalNAc...) serine" evidence="2">
    <location>
        <position position="335"/>
    </location>
</feature>
<feature type="glycosylation site" description="O-linked (GalNAc...) threonine" evidence="2">
    <location>
        <position position="339"/>
    </location>
</feature>
<feature type="glycosylation site" description="O-linked (GalNAc...) threonine" evidence="2">
    <location>
        <position position="348"/>
    </location>
</feature>
<feature type="glycosylation site" description="O-linked (GalNAc...) threonine" evidence="2">
    <location>
        <position position="358"/>
    </location>
</feature>
<feature type="glycosylation site" description="O-linked (GalNAc...) threonine" evidence="2">
    <location>
        <position position="377"/>
    </location>
</feature>
<feature type="glycosylation site" description="O-linked (GalNAc...) serine" evidence="2">
    <location>
        <position position="382"/>
    </location>
</feature>
<feature type="glycosylation site" description="O-linked (GalNAc...) threonine" evidence="2">
    <location>
        <position position="384"/>
    </location>
</feature>
<feature type="glycosylation site" description="O-linked (GalNAc...) threonine" evidence="2">
    <location>
        <position position="385"/>
    </location>
</feature>
<feature type="glycosylation site" description="O-linked (GalNAc...) threonine" evidence="2">
    <location>
        <position position="405"/>
    </location>
</feature>
<feature type="glycosylation site" description="O-linked (GalNAc...) threonine" evidence="2">
    <location>
        <position position="512"/>
    </location>
</feature>
<feature type="glycosylation site" description="O-linked (GalNAc...) threonine" evidence="2">
    <location>
        <position position="516"/>
    </location>
</feature>
<feature type="glycosylation site" description="O-linked (GalNAc...) threonine" evidence="2">
    <location>
        <position position="519"/>
    </location>
</feature>
<feature type="glycosylation site" description="O-linked (GalNAc...) threonine" evidence="2">
    <location>
        <position position="530"/>
    </location>
</feature>
<feature type="glycosylation site" description="O-linked (GalNAc...) threonine" evidence="2">
    <location>
        <position position="542"/>
    </location>
</feature>
<feature type="glycosylation site" description="O-linked (GalNAc...) threonine" evidence="2">
    <location>
        <position position="546"/>
    </location>
</feature>
<feature type="glycosylation site" description="O-linked (GalNAc...) threonine" evidence="2">
    <location>
        <position position="550"/>
    </location>
</feature>
<feature type="glycosylation site" description="O-linked (GalNAc...) threonine" evidence="2">
    <location>
        <position position="562"/>
    </location>
</feature>
<feature type="glycosylation site" description="O-linked (GalNAc...) serine" evidence="2">
    <location>
        <position position="572"/>
    </location>
</feature>
<feature type="glycosylation site" description="O-linked (GalNAc...) threonine" evidence="2">
    <location>
        <position position="573"/>
    </location>
</feature>
<feature type="disulfide bond" evidence="1">
    <location>
        <begin position="20"/>
        <end position="33"/>
    </location>
</feature>
<feature type="disulfide bond" evidence="1">
    <location>
        <begin position="225"/>
        <end position="264"/>
    </location>
</feature>
<feature type="disulfide bond" evidence="1">
    <location>
        <begin position="227"/>
        <end position="280"/>
    </location>
</feature>
<feature type="disulfide bond" description="Interchain (with C-147 in GP1BB)" evidence="1">
    <location>
        <position position="608"/>
    </location>
</feature>
<feature type="disulfide bond" description="Interchain (with C-147 in GP1BB)" evidence="1">
    <location>
        <position position="609"/>
    </location>
</feature>
<feature type="sequence conflict" description="In Ref. 1; AAC53320." evidence="6" ref="1">
    <original>L</original>
    <variation>V</variation>
    <location>
        <position position="532"/>
    </location>
</feature>
<feature type="strand" evidence="7">
    <location>
        <begin position="19"/>
        <end position="23"/>
    </location>
</feature>
<feature type="strand" evidence="7">
    <location>
        <begin position="25"/>
        <end position="32"/>
    </location>
</feature>
<feature type="strand" evidence="7">
    <location>
        <begin position="49"/>
        <end position="53"/>
    </location>
</feature>
<feature type="strand" evidence="7">
    <location>
        <begin position="61"/>
        <end position="63"/>
    </location>
</feature>
<feature type="helix" evidence="7">
    <location>
        <begin position="64"/>
        <end position="67"/>
    </location>
</feature>
<feature type="strand" evidence="7">
    <location>
        <begin position="75"/>
        <end position="77"/>
    </location>
</feature>
<feature type="strand" evidence="7">
    <location>
        <begin position="84"/>
        <end position="87"/>
    </location>
</feature>
<feature type="strand" evidence="7">
    <location>
        <begin position="97"/>
        <end position="99"/>
    </location>
</feature>
<feature type="turn" evidence="7">
    <location>
        <begin position="112"/>
        <end position="114"/>
    </location>
</feature>
<feature type="strand" evidence="7">
    <location>
        <begin position="120"/>
        <end position="122"/>
    </location>
</feature>
<feature type="turn" evidence="7">
    <location>
        <begin position="133"/>
        <end position="138"/>
    </location>
</feature>
<feature type="strand" evidence="7">
    <location>
        <begin position="144"/>
        <end position="146"/>
    </location>
</feature>
<feature type="turn" evidence="7">
    <location>
        <begin position="157"/>
        <end position="162"/>
    </location>
</feature>
<feature type="strand" evidence="7">
    <location>
        <begin position="168"/>
        <end position="170"/>
    </location>
</feature>
<feature type="turn" evidence="7">
    <location>
        <begin position="181"/>
        <end position="186"/>
    </location>
</feature>
<feature type="strand" evidence="7">
    <location>
        <begin position="192"/>
        <end position="194"/>
    </location>
</feature>
<feature type="turn" evidence="7">
    <location>
        <begin position="205"/>
        <end position="210"/>
    </location>
</feature>
<feature type="strand" evidence="7">
    <location>
        <begin position="214"/>
        <end position="217"/>
    </location>
</feature>
<feature type="helix" evidence="7">
    <location>
        <begin position="227"/>
        <end position="229"/>
    </location>
</feature>
<feature type="helix" evidence="7">
    <location>
        <begin position="230"/>
        <end position="238"/>
    </location>
</feature>
<feature type="helix" evidence="7">
    <location>
        <begin position="239"/>
        <end position="242"/>
    </location>
</feature>
<feature type="helix" evidence="7">
    <location>
        <begin position="252"/>
        <end position="254"/>
    </location>
</feature>
<feature type="helix" evidence="7">
    <location>
        <begin position="259"/>
        <end position="261"/>
    </location>
</feature>
<feature type="strand" evidence="7">
    <location>
        <begin position="262"/>
        <end position="264"/>
    </location>
</feature>
<feature type="turn" evidence="7">
    <location>
        <begin position="265"/>
        <end position="269"/>
    </location>
</feature>
<feature type="helix" evidence="7">
    <location>
        <begin position="272"/>
        <end position="274"/>
    </location>
</feature>
<gene>
    <name type="primary">Gp1ba</name>
</gene>
<name>GP1BA_MOUSE</name>
<keyword id="KW-0002">3D-structure</keyword>
<keyword id="KW-0094">Blood coagulation</keyword>
<keyword id="KW-0130">Cell adhesion</keyword>
<keyword id="KW-1015">Disulfide bond</keyword>
<keyword id="KW-0325">Glycoprotein</keyword>
<keyword id="KW-0356">Hemostasis</keyword>
<keyword id="KW-0433">Leucine-rich repeat</keyword>
<keyword id="KW-0472">Membrane</keyword>
<keyword id="KW-0597">Phosphoprotein</keyword>
<keyword id="KW-1185">Reference proteome</keyword>
<keyword id="KW-0677">Repeat</keyword>
<keyword id="KW-0732">Signal</keyword>
<keyword id="KW-0765">Sulfation</keyword>
<keyword id="KW-0812">Transmembrane</keyword>
<keyword id="KW-1133">Transmembrane helix</keyword>